<accession>Q8KA48</accession>
<gene>
    <name type="primary">cysK</name>
    <name type="ordered locus">BUsg_063</name>
</gene>
<reference key="1">
    <citation type="journal article" date="2002" name="Science">
        <title>50 million years of genomic stasis in endosymbiotic bacteria.</title>
        <authorList>
            <person name="Tamas I."/>
            <person name="Klasson L."/>
            <person name="Canbaeck B."/>
            <person name="Naeslund A.K."/>
            <person name="Eriksson A.-S."/>
            <person name="Wernegreen J.J."/>
            <person name="Sandstroem J.P."/>
            <person name="Moran N.A."/>
            <person name="Andersson S.G.E."/>
        </authorList>
    </citation>
    <scope>NUCLEOTIDE SEQUENCE [LARGE SCALE GENOMIC DNA]</scope>
    <source>
        <strain>Sg</strain>
    </source>
</reference>
<comment type="catalytic activity">
    <reaction>
        <text>O-acetyl-L-serine + hydrogen sulfide = L-cysteine + acetate</text>
        <dbReference type="Rhea" id="RHEA:14829"/>
        <dbReference type="ChEBI" id="CHEBI:29919"/>
        <dbReference type="ChEBI" id="CHEBI:30089"/>
        <dbReference type="ChEBI" id="CHEBI:35235"/>
        <dbReference type="ChEBI" id="CHEBI:58340"/>
        <dbReference type="EC" id="2.5.1.47"/>
    </reaction>
</comment>
<comment type="cofactor">
    <cofactor evidence="1">
        <name>pyridoxal 5'-phosphate</name>
        <dbReference type="ChEBI" id="CHEBI:597326"/>
    </cofactor>
</comment>
<comment type="pathway">
    <text>Amino-acid biosynthesis; L-cysteine biosynthesis; L-cysteine from L-serine: step 2/2.</text>
</comment>
<comment type="subunit">
    <text evidence="1">Homodimer.</text>
</comment>
<comment type="similarity">
    <text evidence="3">Belongs to the cysteine synthase/cystathionine beta-synthase family.</text>
</comment>
<name>CYSK_BUCAP</name>
<dbReference type="EC" id="2.5.1.47"/>
<dbReference type="EMBL" id="AE013218">
    <property type="protein sequence ID" value="AAM67634.1"/>
    <property type="molecule type" value="Genomic_DNA"/>
</dbReference>
<dbReference type="RefSeq" id="WP_011053600.1">
    <property type="nucleotide sequence ID" value="NC_004061.1"/>
</dbReference>
<dbReference type="SMR" id="Q8KA48"/>
<dbReference type="STRING" id="198804.BUsg_063"/>
<dbReference type="GeneID" id="93003530"/>
<dbReference type="KEGG" id="bas:BUsg_063"/>
<dbReference type="eggNOG" id="COG0031">
    <property type="taxonomic scope" value="Bacteria"/>
</dbReference>
<dbReference type="HOGENOM" id="CLU_021018_1_2_6"/>
<dbReference type="UniPathway" id="UPA00136">
    <property type="reaction ID" value="UER00200"/>
</dbReference>
<dbReference type="Proteomes" id="UP000000416">
    <property type="component" value="Chromosome"/>
</dbReference>
<dbReference type="GO" id="GO:0004124">
    <property type="term" value="F:cysteine synthase activity"/>
    <property type="evidence" value="ECO:0007669"/>
    <property type="project" value="UniProtKB-EC"/>
</dbReference>
<dbReference type="GO" id="GO:0006535">
    <property type="term" value="P:cysteine biosynthetic process from serine"/>
    <property type="evidence" value="ECO:0007669"/>
    <property type="project" value="InterPro"/>
</dbReference>
<dbReference type="CDD" id="cd01561">
    <property type="entry name" value="CBS_like"/>
    <property type="match status" value="1"/>
</dbReference>
<dbReference type="FunFam" id="3.40.50.1100:FF:000009">
    <property type="entry name" value="Cysteine synthase"/>
    <property type="match status" value="1"/>
</dbReference>
<dbReference type="Gene3D" id="3.40.50.1100">
    <property type="match status" value="2"/>
</dbReference>
<dbReference type="InterPro" id="IPR005856">
    <property type="entry name" value="Cys_synth"/>
</dbReference>
<dbReference type="InterPro" id="IPR050214">
    <property type="entry name" value="Cys_Synth/Cystath_Beta-Synth"/>
</dbReference>
<dbReference type="InterPro" id="IPR005859">
    <property type="entry name" value="CysK"/>
</dbReference>
<dbReference type="InterPro" id="IPR001216">
    <property type="entry name" value="P-phosphate_BS"/>
</dbReference>
<dbReference type="InterPro" id="IPR001926">
    <property type="entry name" value="TrpB-like_PALP"/>
</dbReference>
<dbReference type="InterPro" id="IPR036052">
    <property type="entry name" value="TrpB-like_PALP_sf"/>
</dbReference>
<dbReference type="NCBIfam" id="TIGR01139">
    <property type="entry name" value="cysK"/>
    <property type="match status" value="1"/>
</dbReference>
<dbReference type="NCBIfam" id="TIGR01136">
    <property type="entry name" value="cysKM"/>
    <property type="match status" value="1"/>
</dbReference>
<dbReference type="PANTHER" id="PTHR10314">
    <property type="entry name" value="CYSTATHIONINE BETA-SYNTHASE"/>
    <property type="match status" value="1"/>
</dbReference>
<dbReference type="Pfam" id="PF00291">
    <property type="entry name" value="PALP"/>
    <property type="match status" value="1"/>
</dbReference>
<dbReference type="SUPFAM" id="SSF53686">
    <property type="entry name" value="Tryptophan synthase beta subunit-like PLP-dependent enzymes"/>
    <property type="match status" value="1"/>
</dbReference>
<dbReference type="PROSITE" id="PS00901">
    <property type="entry name" value="CYS_SYNTHASE"/>
    <property type="match status" value="1"/>
</dbReference>
<protein>
    <recommendedName>
        <fullName>Cysteine synthase</fullName>
        <shortName>CSase</shortName>
        <ecNumber>2.5.1.47</ecNumber>
    </recommendedName>
    <alternativeName>
        <fullName>O-acetylserine (thiol)-lyase</fullName>
        <shortName>OAS-TL</shortName>
    </alternativeName>
    <alternativeName>
        <fullName>O-acetylserine sulfhydrylase</fullName>
    </alternativeName>
</protein>
<organism>
    <name type="scientific">Buchnera aphidicola subsp. Schizaphis graminum (strain Sg)</name>
    <dbReference type="NCBI Taxonomy" id="198804"/>
    <lineage>
        <taxon>Bacteria</taxon>
        <taxon>Pseudomonadati</taxon>
        <taxon>Pseudomonadota</taxon>
        <taxon>Gammaproteobacteria</taxon>
        <taxon>Enterobacterales</taxon>
        <taxon>Erwiniaceae</taxon>
        <taxon>Buchnera</taxon>
    </lineage>
</organism>
<proteinExistence type="inferred from homology"/>
<feature type="chain" id="PRO_0000167084" description="Cysteine synthase">
    <location>
        <begin position="1"/>
        <end position="322"/>
    </location>
</feature>
<feature type="binding site" evidence="2">
    <location>
        <position position="8"/>
    </location>
    <ligand>
        <name>hydrogen sulfide</name>
        <dbReference type="ChEBI" id="CHEBI:29919"/>
        <note>allosteric inhibitor; ligand shared between dimeric partners</note>
    </ligand>
</feature>
<feature type="binding site" description="in other chain" evidence="2">
    <location>
        <position position="35"/>
    </location>
    <ligand>
        <name>hydrogen sulfide</name>
        <dbReference type="ChEBI" id="CHEBI:29919"/>
        <note>allosteric inhibitor; ligand shared between dimeric partners</note>
    </ligand>
</feature>
<feature type="binding site" evidence="1">
    <location>
        <position position="72"/>
    </location>
    <ligand>
        <name>pyridoxal 5'-phosphate</name>
        <dbReference type="ChEBI" id="CHEBI:597326"/>
    </ligand>
</feature>
<feature type="binding site" evidence="1">
    <location>
        <begin position="177"/>
        <end position="181"/>
    </location>
    <ligand>
        <name>pyridoxal 5'-phosphate</name>
        <dbReference type="ChEBI" id="CHEBI:597326"/>
    </ligand>
</feature>
<feature type="binding site" description="in other chain" evidence="2">
    <location>
        <position position="269"/>
    </location>
    <ligand>
        <name>hydrogen sulfide</name>
        <dbReference type="ChEBI" id="CHEBI:29919"/>
        <note>allosteric inhibitor; ligand shared between dimeric partners</note>
    </ligand>
</feature>
<feature type="binding site" evidence="1">
    <location>
        <position position="273"/>
    </location>
    <ligand>
        <name>pyridoxal 5'-phosphate</name>
        <dbReference type="ChEBI" id="CHEBI:597326"/>
    </ligand>
</feature>
<feature type="modified residue" description="N6-(pyridoxal phosphate)lysine" evidence="1">
    <location>
        <position position="42"/>
    </location>
</feature>
<keyword id="KW-0021">Allosteric enzyme</keyword>
<keyword id="KW-0028">Amino-acid biosynthesis</keyword>
<keyword id="KW-0198">Cysteine biosynthesis</keyword>
<keyword id="KW-0663">Pyridoxal phosphate</keyword>
<keyword id="KW-0808">Transferase</keyword>
<evidence type="ECO:0000250" key="1"/>
<evidence type="ECO:0000250" key="2">
    <source>
        <dbReference type="UniProtKB" id="P0A1E3"/>
    </source>
</evidence>
<evidence type="ECO:0000305" key="3"/>
<sequence length="322" mass="35177">MNKIYEDNSFTIGNTPLVRLNNIGNGNILAKIESRNPSFSVKCRIGANMIWDAEKKGRLNKNIEIIEATSGNTGIALAYVAAARNYSLTLIMPDSMSIERRKLLKSLGAHLILTNGKHGMKGAISKANEIVSLNTKRYLLLKQFENPANPEIHQKTTGPEIWKDTKGNIDILISGVGTGGTITGITKYIKIKEGKKDLISVAVEPLESPVITQFLSGKKIKPGLHKIQGIGAGFIPKNLDLSLIDRIITVSSEEAIFNAKKIMKKEGILSGISSGAAIAAALKIQKENDFKNKNIVVILPSSGERYLSTELFSRSFKNENNY</sequence>